<gene>
    <name evidence="2" type="primary">exd</name>
    <name type="ORF">AGAP004696</name>
</gene>
<evidence type="ECO:0000250" key="1"/>
<evidence type="ECO:0000250" key="2">
    <source>
        <dbReference type="UniProtKB" id="P40427"/>
    </source>
</evidence>
<evidence type="ECO:0000255" key="3"/>
<evidence type="ECO:0000255" key="4">
    <source>
        <dbReference type="PROSITE-ProRule" id="PRU00108"/>
    </source>
</evidence>
<evidence type="ECO:0000255" key="5">
    <source>
        <dbReference type="PROSITE-ProRule" id="PRU01322"/>
    </source>
</evidence>
<evidence type="ECO:0000256" key="6">
    <source>
        <dbReference type="SAM" id="MobiDB-lite"/>
    </source>
</evidence>
<evidence type="ECO:0000312" key="7">
    <source>
        <dbReference type="EMBL" id="EAA13242.3"/>
    </source>
</evidence>
<feature type="chain" id="PRO_0000341509" description="Homeobox protein extradenticle">
    <location>
        <begin position="1"/>
        <end position="362"/>
    </location>
</feature>
<feature type="domain" description="PBC" evidence="5">
    <location>
        <begin position="34"/>
        <end position="225"/>
    </location>
</feature>
<feature type="DNA-binding region" description="Homeobox; TALE-type" evidence="4">
    <location>
        <begin position="226"/>
        <end position="288"/>
    </location>
</feature>
<feature type="region of interest" description="PBC-A" evidence="5">
    <location>
        <begin position="41"/>
        <end position="120"/>
    </location>
</feature>
<feature type="region of interest" description="PBC-B" evidence="5">
    <location>
        <begin position="123"/>
        <end position="225"/>
    </location>
</feature>
<feature type="region of interest" description="Disordered" evidence="6">
    <location>
        <begin position="305"/>
        <end position="362"/>
    </location>
</feature>
<proteinExistence type="inferred from homology"/>
<sequence>MEDPNRMMGGHGGLMPPNYGMPTNDGQAGVDNDPRKQDIGEILQQIMNITDQSLDEAQARKHTLNCHRMKPVLFAVLCEIKEKTVLSLRNTQEEEPPDPQLMRLDNMLIAEGVAGPEKGGGADFLSQSDLTGGQDNAIEHSDYRAKLAQIRQIYHQELEKYEQACSEFTTHVMNLLREQSRTRPITPKEIERMVQIIHRKFSSIQMQLKQSTCEAVMILRSRFLDARRKRRNFSKQASEILNEYFYSHLSNPYPSEEAKEELARKCGITVSQVSNWFGNKRIRYKKNIGKAQEEANLYAAKKAAGASPYSMGGPPSGAATPMMSPAPAQDSMGYSLGSGGYDQQQPYDGSMGYDQLHQDLSP</sequence>
<protein>
    <recommendedName>
        <fullName>Homeobox protein extradenticle</fullName>
    </recommendedName>
</protein>
<keyword id="KW-0217">Developmental protein</keyword>
<keyword id="KW-0238">DNA-binding</keyword>
<keyword id="KW-0371">Homeobox</keyword>
<keyword id="KW-0539">Nucleus</keyword>
<keyword id="KW-1185">Reference proteome</keyword>
<keyword id="KW-0804">Transcription</keyword>
<keyword id="KW-0805">Transcription regulation</keyword>
<accession>Q7PMT1</accession>
<name>EXD_ANOGA</name>
<organism>
    <name type="scientific">Anopheles gambiae</name>
    <name type="common">African malaria mosquito</name>
    <dbReference type="NCBI Taxonomy" id="7165"/>
    <lineage>
        <taxon>Eukaryota</taxon>
        <taxon>Metazoa</taxon>
        <taxon>Ecdysozoa</taxon>
        <taxon>Arthropoda</taxon>
        <taxon>Hexapoda</taxon>
        <taxon>Insecta</taxon>
        <taxon>Pterygota</taxon>
        <taxon>Neoptera</taxon>
        <taxon>Endopterygota</taxon>
        <taxon>Diptera</taxon>
        <taxon>Nematocera</taxon>
        <taxon>Culicoidea</taxon>
        <taxon>Culicidae</taxon>
        <taxon>Anophelinae</taxon>
        <taxon>Anopheles</taxon>
    </lineage>
</organism>
<comment type="function">
    <text evidence="1">Transcription factor which acts with the selector homeodomain proteins altering the regulation of downstream target genes such as wingless (wg), teashirt (tsh) and decapentaplegic (dpp), thus affecting segmental identity.</text>
</comment>
<comment type="subcellular location">
    <subcellularLocation>
        <location evidence="2 4">Nucleus</location>
    </subcellularLocation>
</comment>
<comment type="similarity">
    <text evidence="3">Belongs to the TALE/PBX homeobox family.</text>
</comment>
<dbReference type="EMBL" id="AAAB01008968">
    <property type="protein sequence ID" value="EAA13242.3"/>
    <property type="molecule type" value="Genomic_DNA"/>
</dbReference>
<dbReference type="SMR" id="Q7PMT1"/>
<dbReference type="FunCoup" id="Q7PMT1">
    <property type="interactions" value="1315"/>
</dbReference>
<dbReference type="STRING" id="7165.Q7PMT1"/>
<dbReference type="PaxDb" id="7165-AGAP004696-PA"/>
<dbReference type="EnsemblMetazoa" id="AGAP004696-RA">
    <property type="protein sequence ID" value="AGAP004696-PA"/>
    <property type="gene ID" value="AGAP004696"/>
</dbReference>
<dbReference type="GeneID" id="1278540"/>
<dbReference type="KEGG" id="aga:1278540"/>
<dbReference type="CTD" id="32567"/>
<dbReference type="VEuPathDB" id="VectorBase:AGAMI1_002623"/>
<dbReference type="VEuPathDB" id="VectorBase:AGAP004696"/>
<dbReference type="eggNOG" id="KOG0774">
    <property type="taxonomic scope" value="Eukaryota"/>
</dbReference>
<dbReference type="HOGENOM" id="CLU_041153_1_1_1"/>
<dbReference type="InParanoid" id="Q7PMT1"/>
<dbReference type="OMA" id="CHRMRHA"/>
<dbReference type="OrthoDB" id="4187154at2759"/>
<dbReference type="PhylomeDB" id="Q7PMT1"/>
<dbReference type="Proteomes" id="UP000007062">
    <property type="component" value="Chromosome 2L"/>
</dbReference>
<dbReference type="GO" id="GO:0005634">
    <property type="term" value="C:nucleus"/>
    <property type="evidence" value="ECO:0007669"/>
    <property type="project" value="UniProtKB-SubCell"/>
</dbReference>
<dbReference type="GO" id="GO:0005667">
    <property type="term" value="C:transcription regulator complex"/>
    <property type="evidence" value="ECO:0000250"/>
    <property type="project" value="UniProtKB"/>
</dbReference>
<dbReference type="GO" id="GO:0000987">
    <property type="term" value="F:cis-regulatory region sequence-specific DNA binding"/>
    <property type="evidence" value="ECO:0007669"/>
    <property type="project" value="UniProtKB-ARBA"/>
</dbReference>
<dbReference type="GO" id="GO:0003677">
    <property type="term" value="F:DNA binding"/>
    <property type="evidence" value="ECO:0000250"/>
    <property type="project" value="UniProtKB"/>
</dbReference>
<dbReference type="GO" id="GO:0003700">
    <property type="term" value="F:DNA-binding transcription factor activity"/>
    <property type="evidence" value="ECO:0000250"/>
    <property type="project" value="UniProtKB"/>
</dbReference>
<dbReference type="GO" id="GO:0000981">
    <property type="term" value="F:DNA-binding transcription factor activity, RNA polymerase II-specific"/>
    <property type="evidence" value="ECO:0007669"/>
    <property type="project" value="InterPro"/>
</dbReference>
<dbReference type="GO" id="GO:0048646">
    <property type="term" value="P:anatomical structure formation involved in morphogenesis"/>
    <property type="evidence" value="ECO:0007669"/>
    <property type="project" value="UniProtKB-ARBA"/>
</dbReference>
<dbReference type="GO" id="GO:0009887">
    <property type="term" value="P:animal organ morphogenesis"/>
    <property type="evidence" value="ECO:0000318"/>
    <property type="project" value="GO_Central"/>
</dbReference>
<dbReference type="GO" id="GO:0048568">
    <property type="term" value="P:embryonic organ development"/>
    <property type="evidence" value="ECO:0000318"/>
    <property type="project" value="GO_Central"/>
</dbReference>
<dbReference type="GO" id="GO:0001654">
    <property type="term" value="P:eye development"/>
    <property type="evidence" value="ECO:0000250"/>
    <property type="project" value="UniProtKB"/>
</dbReference>
<dbReference type="GO" id="GO:0048666">
    <property type="term" value="P:neuron development"/>
    <property type="evidence" value="ECO:0000318"/>
    <property type="project" value="GO_Central"/>
</dbReference>
<dbReference type="GO" id="GO:0007422">
    <property type="term" value="P:peripheral nervous system development"/>
    <property type="evidence" value="ECO:0000250"/>
    <property type="project" value="UniProtKB"/>
</dbReference>
<dbReference type="GO" id="GO:0006357">
    <property type="term" value="P:regulation of transcription by RNA polymerase II"/>
    <property type="evidence" value="ECO:0000250"/>
    <property type="project" value="UniProtKB"/>
</dbReference>
<dbReference type="CDD" id="cd00086">
    <property type="entry name" value="homeodomain"/>
    <property type="match status" value="1"/>
</dbReference>
<dbReference type="FunFam" id="1.10.10.60:FF:000008">
    <property type="entry name" value="Pre-B-cell leukemia transcription factor 1"/>
    <property type="match status" value="1"/>
</dbReference>
<dbReference type="Gene3D" id="1.10.10.60">
    <property type="entry name" value="Homeodomain-like"/>
    <property type="match status" value="1"/>
</dbReference>
<dbReference type="InterPro" id="IPR001356">
    <property type="entry name" value="HD"/>
</dbReference>
<dbReference type="InterPro" id="IPR017970">
    <property type="entry name" value="Homeobox_CS"/>
</dbReference>
<dbReference type="InterPro" id="IPR009057">
    <property type="entry name" value="Homeodomain-like_sf"/>
</dbReference>
<dbReference type="InterPro" id="IPR008422">
    <property type="entry name" value="KN_HD"/>
</dbReference>
<dbReference type="InterPro" id="IPR005542">
    <property type="entry name" value="PBX_PBC_dom"/>
</dbReference>
<dbReference type="InterPro" id="IPR050224">
    <property type="entry name" value="TALE_homeobox"/>
</dbReference>
<dbReference type="PANTHER" id="PTHR11850">
    <property type="entry name" value="HOMEOBOX PROTEIN TRANSCRIPTION FACTORS"/>
    <property type="match status" value="1"/>
</dbReference>
<dbReference type="Pfam" id="PF05920">
    <property type="entry name" value="Homeobox_KN"/>
    <property type="match status" value="1"/>
</dbReference>
<dbReference type="Pfam" id="PF03792">
    <property type="entry name" value="PBC"/>
    <property type="match status" value="1"/>
</dbReference>
<dbReference type="SMART" id="SM00389">
    <property type="entry name" value="HOX"/>
    <property type="match status" value="1"/>
</dbReference>
<dbReference type="SUPFAM" id="SSF46689">
    <property type="entry name" value="Homeodomain-like"/>
    <property type="match status" value="1"/>
</dbReference>
<dbReference type="PROSITE" id="PS00027">
    <property type="entry name" value="HOMEOBOX_1"/>
    <property type="match status" value="1"/>
</dbReference>
<dbReference type="PROSITE" id="PS50071">
    <property type="entry name" value="HOMEOBOX_2"/>
    <property type="match status" value="1"/>
</dbReference>
<dbReference type="PROSITE" id="PS51978">
    <property type="entry name" value="PBC"/>
    <property type="match status" value="1"/>
</dbReference>
<reference evidence="7" key="1">
    <citation type="journal article" date="2002" name="Science">
        <title>The genome sequence of the malaria mosquito Anopheles gambiae.</title>
        <authorList>
            <person name="Holt R.A."/>
            <person name="Subramanian G.M."/>
            <person name="Halpern A."/>
            <person name="Sutton G.G."/>
            <person name="Charlab R."/>
            <person name="Nusskern D.R."/>
            <person name="Wincker P."/>
            <person name="Clark A.G."/>
            <person name="Ribeiro J.M.C."/>
            <person name="Wides R."/>
            <person name="Salzberg S.L."/>
            <person name="Loftus B.J."/>
            <person name="Yandell M.D."/>
            <person name="Majoros W.H."/>
            <person name="Rusch D.B."/>
            <person name="Lai Z."/>
            <person name="Kraft C.L."/>
            <person name="Abril J.F."/>
            <person name="Anthouard V."/>
            <person name="Arensburger P."/>
            <person name="Atkinson P.W."/>
            <person name="Baden H."/>
            <person name="de Berardinis V."/>
            <person name="Baldwin D."/>
            <person name="Benes V."/>
            <person name="Biedler J."/>
            <person name="Blass C."/>
            <person name="Bolanos R."/>
            <person name="Boscus D."/>
            <person name="Barnstead M."/>
            <person name="Cai S."/>
            <person name="Center A."/>
            <person name="Chaturverdi K."/>
            <person name="Christophides G.K."/>
            <person name="Chrystal M.A.M."/>
            <person name="Clamp M."/>
            <person name="Cravchik A."/>
            <person name="Curwen V."/>
            <person name="Dana A."/>
            <person name="Delcher A."/>
            <person name="Dew I."/>
            <person name="Evans C.A."/>
            <person name="Flanigan M."/>
            <person name="Grundschober-Freimoser A."/>
            <person name="Friedli L."/>
            <person name="Gu Z."/>
            <person name="Guan P."/>
            <person name="Guigo R."/>
            <person name="Hillenmeyer M.E."/>
            <person name="Hladun S.L."/>
            <person name="Hogan J.R."/>
            <person name="Hong Y.S."/>
            <person name="Hoover J."/>
            <person name="Jaillon O."/>
            <person name="Ke Z."/>
            <person name="Kodira C.D."/>
            <person name="Kokoza E."/>
            <person name="Koutsos A."/>
            <person name="Letunic I."/>
            <person name="Levitsky A.A."/>
            <person name="Liang Y."/>
            <person name="Lin J.-J."/>
            <person name="Lobo N.F."/>
            <person name="Lopez J.R."/>
            <person name="Malek J.A."/>
            <person name="McIntosh T.C."/>
            <person name="Meister S."/>
            <person name="Miller J.R."/>
            <person name="Mobarry C."/>
            <person name="Mongin E."/>
            <person name="Murphy S.D."/>
            <person name="O'Brochta D.A."/>
            <person name="Pfannkoch C."/>
            <person name="Qi R."/>
            <person name="Regier M.A."/>
            <person name="Remington K."/>
            <person name="Shao H."/>
            <person name="Sharakhova M.V."/>
            <person name="Sitter C.D."/>
            <person name="Shetty J."/>
            <person name="Smith T.J."/>
            <person name="Strong R."/>
            <person name="Sun J."/>
            <person name="Thomasova D."/>
            <person name="Ton L.Q."/>
            <person name="Topalis P."/>
            <person name="Tu Z.J."/>
            <person name="Unger M.F."/>
            <person name="Walenz B."/>
            <person name="Wang A.H."/>
            <person name="Wang J."/>
            <person name="Wang M."/>
            <person name="Wang X."/>
            <person name="Woodford K.J."/>
            <person name="Wortman J.R."/>
            <person name="Wu M."/>
            <person name="Yao A."/>
            <person name="Zdobnov E.M."/>
            <person name="Zhang H."/>
            <person name="Zhao Q."/>
            <person name="Zhao S."/>
            <person name="Zhu S.C."/>
            <person name="Zhimulev I."/>
            <person name="Coluzzi M."/>
            <person name="della Torre A."/>
            <person name="Roth C.W."/>
            <person name="Louis C."/>
            <person name="Kalush F."/>
            <person name="Mural R.J."/>
            <person name="Myers E.W."/>
            <person name="Adams M.D."/>
            <person name="Smith H.O."/>
            <person name="Broder S."/>
            <person name="Gardner M.J."/>
            <person name="Fraser C.M."/>
            <person name="Birney E."/>
            <person name="Bork P."/>
            <person name="Brey P.T."/>
            <person name="Venter J.C."/>
            <person name="Weissenbach J."/>
            <person name="Kafatos F.C."/>
            <person name="Collins F.H."/>
            <person name="Hoffman S.L."/>
        </authorList>
    </citation>
    <scope>NUCLEOTIDE SEQUENCE [LARGE SCALE GENOMIC DNA]</scope>
    <source>
        <strain>PEST</strain>
    </source>
</reference>